<keyword id="KW-1185">Reference proteome</keyword>
<organism>
    <name type="scientific">Acanthamoeba polyphaga mimivirus</name>
    <name type="common">APMV</name>
    <dbReference type="NCBI Taxonomy" id="212035"/>
    <lineage>
        <taxon>Viruses</taxon>
        <taxon>Varidnaviria</taxon>
        <taxon>Bamfordvirae</taxon>
        <taxon>Nucleocytoviricota</taxon>
        <taxon>Megaviricetes</taxon>
        <taxon>Imitervirales</taxon>
        <taxon>Mimiviridae</taxon>
        <taxon>Megamimivirinae</taxon>
        <taxon>Mimivirus</taxon>
        <taxon>Mimivirus bradfordmassiliense</taxon>
    </lineage>
</organism>
<dbReference type="EMBL" id="AY653733">
    <property type="protein sequence ID" value="AAV50448.1"/>
    <property type="molecule type" value="Genomic_DNA"/>
</dbReference>
<dbReference type="Proteomes" id="UP000001134">
    <property type="component" value="Genome"/>
</dbReference>
<evidence type="ECO:0000256" key="1">
    <source>
        <dbReference type="SAM" id="MobiDB-lite"/>
    </source>
</evidence>
<evidence type="ECO:0000305" key="2"/>
<reference key="1">
    <citation type="journal article" date="2004" name="Science">
        <title>The 1.2-megabase genome sequence of Mimivirus.</title>
        <authorList>
            <person name="Raoult D."/>
            <person name="Audic S."/>
            <person name="Robert C."/>
            <person name="Abergel C."/>
            <person name="Renesto P."/>
            <person name="Ogata H."/>
            <person name="La Scola B."/>
            <person name="Susan M."/>
            <person name="Claverie J.-M."/>
        </authorList>
    </citation>
    <scope>NUCLEOTIDE SEQUENCE [LARGE SCALE GENOMIC DNA]</scope>
    <source>
        <strain>Rowbotham-Bradford</strain>
    </source>
</reference>
<name>YL174_MIMIV</name>
<feature type="chain" id="PRO_0000071230" description="Uncharacterized protein L174">
    <location>
        <begin position="1"/>
        <end position="332"/>
    </location>
</feature>
<feature type="region of interest" description="Disordered" evidence="1">
    <location>
        <begin position="290"/>
        <end position="332"/>
    </location>
</feature>
<feature type="compositionally biased region" description="Acidic residues" evidence="1">
    <location>
        <begin position="290"/>
        <end position="314"/>
    </location>
</feature>
<feature type="compositionally biased region" description="Acidic residues" evidence="1">
    <location>
        <begin position="323"/>
        <end position="332"/>
    </location>
</feature>
<comment type="similarity">
    <text evidence="2">Belongs to the mimivirus L17x/L18x family.</text>
</comment>
<sequence length="332" mass="38916">MYYKYIFQNGYLKHIKIFMTVFMELLRLLNHINLYNIIHHEELFENGIDNETFFYLFKIGFLGDIIDIINHVVSNTKTITVDFMDKILVVYKNKLIQYAIDDICINSACYDKIYKILIDKSLETDNLNLFNFIVKELDTVFMDVDESKLTFRQKNRLDSIKNKHSYNSTRINSIIKICLSKHSPVKNCPKIFSQLITDLGGVMEMIDHDFYKIFYRGIINYAEIVCENLIHTSPELIDDLLLKARRMEMFQLLVDHGANYKKIYKTTPDEKQKKSLKRFINNLKDKEYLEDIDDIDDSDESDDSDDSEDSDSFGDSDSSGNSEDSEDSDNSE</sequence>
<organismHost>
    <name type="scientific">Acanthamoeba polyphaga</name>
    <name type="common">Amoeba</name>
    <dbReference type="NCBI Taxonomy" id="5757"/>
</organismHost>
<accession>Q5UPP1</accession>
<proteinExistence type="inferred from homology"/>
<protein>
    <recommendedName>
        <fullName>Uncharacterized protein L174</fullName>
    </recommendedName>
</protein>
<gene>
    <name type="ordered locus">MIMI_L174</name>
</gene>